<comment type="function">
    <text evidence="1">The UvrABC repair system catalyzes the recognition and processing of DNA lesions. UvrC both incises the 5' and 3' sides of the lesion. The N-terminal half is responsible for the 3' incision and the C-terminal half is responsible for the 5' incision.</text>
</comment>
<comment type="subunit">
    <text evidence="1">Interacts with UvrB in an incision complex.</text>
</comment>
<comment type="subcellular location">
    <subcellularLocation>
        <location evidence="1">Cytoplasm</location>
    </subcellularLocation>
</comment>
<comment type="similarity">
    <text evidence="1">Belongs to the UvrC family.</text>
</comment>
<organism>
    <name type="scientific">Thermosipho africanus (strain TCF52B)</name>
    <dbReference type="NCBI Taxonomy" id="484019"/>
    <lineage>
        <taxon>Bacteria</taxon>
        <taxon>Thermotogati</taxon>
        <taxon>Thermotogota</taxon>
        <taxon>Thermotogae</taxon>
        <taxon>Thermotogales</taxon>
        <taxon>Fervidobacteriaceae</taxon>
        <taxon>Thermosipho</taxon>
    </lineage>
</organism>
<accession>B7IEM8</accession>
<feature type="chain" id="PRO_1000200608" description="UvrABC system protein C">
    <location>
        <begin position="1"/>
        <end position="551"/>
    </location>
</feature>
<feature type="domain" description="GIY-YIG" evidence="1">
    <location>
        <begin position="12"/>
        <end position="87"/>
    </location>
</feature>
<feature type="domain" description="UVR" evidence="1">
    <location>
        <begin position="193"/>
        <end position="228"/>
    </location>
</feature>
<dbReference type="EMBL" id="CP001185">
    <property type="protein sequence ID" value="ACJ74542.1"/>
    <property type="molecule type" value="Genomic_DNA"/>
</dbReference>
<dbReference type="RefSeq" id="WP_012579308.1">
    <property type="nucleotide sequence ID" value="NC_011653.1"/>
</dbReference>
<dbReference type="SMR" id="B7IEM8"/>
<dbReference type="STRING" id="484019.THA_34"/>
<dbReference type="KEGG" id="taf:THA_34"/>
<dbReference type="eggNOG" id="COG0322">
    <property type="taxonomic scope" value="Bacteria"/>
</dbReference>
<dbReference type="HOGENOM" id="CLU_014841_3_2_0"/>
<dbReference type="OrthoDB" id="9804933at2"/>
<dbReference type="Proteomes" id="UP000002453">
    <property type="component" value="Chromosome"/>
</dbReference>
<dbReference type="GO" id="GO:0005737">
    <property type="term" value="C:cytoplasm"/>
    <property type="evidence" value="ECO:0007669"/>
    <property type="project" value="UniProtKB-SubCell"/>
</dbReference>
<dbReference type="GO" id="GO:0009380">
    <property type="term" value="C:excinuclease repair complex"/>
    <property type="evidence" value="ECO:0007669"/>
    <property type="project" value="InterPro"/>
</dbReference>
<dbReference type="GO" id="GO:0003677">
    <property type="term" value="F:DNA binding"/>
    <property type="evidence" value="ECO:0007669"/>
    <property type="project" value="UniProtKB-UniRule"/>
</dbReference>
<dbReference type="GO" id="GO:0009381">
    <property type="term" value="F:excinuclease ABC activity"/>
    <property type="evidence" value="ECO:0007669"/>
    <property type="project" value="UniProtKB-UniRule"/>
</dbReference>
<dbReference type="GO" id="GO:0006289">
    <property type="term" value="P:nucleotide-excision repair"/>
    <property type="evidence" value="ECO:0007669"/>
    <property type="project" value="UniProtKB-UniRule"/>
</dbReference>
<dbReference type="GO" id="GO:0009432">
    <property type="term" value="P:SOS response"/>
    <property type="evidence" value="ECO:0007669"/>
    <property type="project" value="UniProtKB-UniRule"/>
</dbReference>
<dbReference type="CDD" id="cd10434">
    <property type="entry name" value="GIY-YIG_UvrC_Cho"/>
    <property type="match status" value="1"/>
</dbReference>
<dbReference type="FunFam" id="3.40.1440.10:FF:000001">
    <property type="entry name" value="UvrABC system protein C"/>
    <property type="match status" value="1"/>
</dbReference>
<dbReference type="Gene3D" id="1.10.150.20">
    <property type="entry name" value="5' to 3' exonuclease, C-terminal subdomain"/>
    <property type="match status" value="1"/>
</dbReference>
<dbReference type="Gene3D" id="3.40.1440.10">
    <property type="entry name" value="GIY-YIG endonuclease"/>
    <property type="match status" value="1"/>
</dbReference>
<dbReference type="Gene3D" id="3.30.420.340">
    <property type="entry name" value="UvrC, RNAse H endonuclease domain"/>
    <property type="match status" value="1"/>
</dbReference>
<dbReference type="HAMAP" id="MF_00203">
    <property type="entry name" value="UvrC"/>
    <property type="match status" value="1"/>
</dbReference>
<dbReference type="InterPro" id="IPR000305">
    <property type="entry name" value="GIY-YIG_endonuc"/>
</dbReference>
<dbReference type="InterPro" id="IPR035901">
    <property type="entry name" value="GIY-YIG_endonuc_sf"/>
</dbReference>
<dbReference type="InterPro" id="IPR047296">
    <property type="entry name" value="GIY-YIG_UvrC_Cho"/>
</dbReference>
<dbReference type="InterPro" id="IPR010994">
    <property type="entry name" value="RuvA_2-like"/>
</dbReference>
<dbReference type="InterPro" id="IPR001943">
    <property type="entry name" value="UVR_dom"/>
</dbReference>
<dbReference type="InterPro" id="IPR036876">
    <property type="entry name" value="UVR_dom_sf"/>
</dbReference>
<dbReference type="InterPro" id="IPR050066">
    <property type="entry name" value="UvrABC_protein_C"/>
</dbReference>
<dbReference type="InterPro" id="IPR004791">
    <property type="entry name" value="UvrC"/>
</dbReference>
<dbReference type="InterPro" id="IPR001162">
    <property type="entry name" value="UvrC_RNase_H_dom"/>
</dbReference>
<dbReference type="InterPro" id="IPR038476">
    <property type="entry name" value="UvrC_RNase_H_dom_sf"/>
</dbReference>
<dbReference type="NCBIfam" id="TIGR00194">
    <property type="entry name" value="uvrC"/>
    <property type="match status" value="1"/>
</dbReference>
<dbReference type="PANTHER" id="PTHR30562:SF1">
    <property type="entry name" value="UVRABC SYSTEM PROTEIN C"/>
    <property type="match status" value="1"/>
</dbReference>
<dbReference type="PANTHER" id="PTHR30562">
    <property type="entry name" value="UVRC/OXIDOREDUCTASE"/>
    <property type="match status" value="1"/>
</dbReference>
<dbReference type="Pfam" id="PF01541">
    <property type="entry name" value="GIY-YIG"/>
    <property type="match status" value="1"/>
</dbReference>
<dbReference type="Pfam" id="PF14520">
    <property type="entry name" value="HHH_5"/>
    <property type="match status" value="1"/>
</dbReference>
<dbReference type="Pfam" id="PF02151">
    <property type="entry name" value="UVR"/>
    <property type="match status" value="1"/>
</dbReference>
<dbReference type="Pfam" id="PF08459">
    <property type="entry name" value="UvrC_RNaseH_dom"/>
    <property type="match status" value="1"/>
</dbReference>
<dbReference type="SMART" id="SM00465">
    <property type="entry name" value="GIYc"/>
    <property type="match status" value="1"/>
</dbReference>
<dbReference type="SUPFAM" id="SSF46600">
    <property type="entry name" value="C-terminal UvrC-binding domain of UvrB"/>
    <property type="match status" value="1"/>
</dbReference>
<dbReference type="SUPFAM" id="SSF82771">
    <property type="entry name" value="GIY-YIG endonuclease"/>
    <property type="match status" value="1"/>
</dbReference>
<dbReference type="SUPFAM" id="SSF47781">
    <property type="entry name" value="RuvA domain 2-like"/>
    <property type="match status" value="1"/>
</dbReference>
<dbReference type="PROSITE" id="PS50164">
    <property type="entry name" value="GIY_YIG"/>
    <property type="match status" value="1"/>
</dbReference>
<dbReference type="PROSITE" id="PS50151">
    <property type="entry name" value="UVR"/>
    <property type="match status" value="1"/>
</dbReference>
<dbReference type="PROSITE" id="PS50165">
    <property type="entry name" value="UVRC"/>
    <property type="match status" value="1"/>
</dbReference>
<proteinExistence type="inferred from homology"/>
<reference key="1">
    <citation type="journal article" date="2009" name="J. Bacteriol.">
        <title>The genome of Thermosipho africanus TCF52B: lateral genetic connections to the Firmicutes and Archaea.</title>
        <authorList>
            <person name="Nesboe C.L."/>
            <person name="Bapteste E."/>
            <person name="Curtis B."/>
            <person name="Dahle H."/>
            <person name="Lopez P."/>
            <person name="Macleod D."/>
            <person name="Dlutek M."/>
            <person name="Bowman S."/>
            <person name="Zhaxybayeva O."/>
            <person name="Birkeland N.-K."/>
            <person name="Doolittle W.F."/>
        </authorList>
    </citation>
    <scope>NUCLEOTIDE SEQUENCE [LARGE SCALE GENOMIC DNA]</scope>
    <source>
        <strain>TCF52B</strain>
    </source>
</reference>
<gene>
    <name evidence="1" type="primary">uvrC</name>
    <name type="ordered locus">THA_34</name>
</gene>
<name>UVRC_THEAB</name>
<keyword id="KW-0963">Cytoplasm</keyword>
<keyword id="KW-0227">DNA damage</keyword>
<keyword id="KW-0228">DNA excision</keyword>
<keyword id="KW-0234">DNA repair</keyword>
<keyword id="KW-0267">Excision nuclease</keyword>
<keyword id="KW-1185">Reference proteome</keyword>
<keyword id="KW-0742">SOS response</keyword>
<protein>
    <recommendedName>
        <fullName evidence="1">UvrABC system protein C</fullName>
        <shortName evidence="1">Protein UvrC</shortName>
    </recommendedName>
    <alternativeName>
        <fullName evidence="1">Excinuclease ABC subunit C</fullName>
    </alternativeName>
</protein>
<evidence type="ECO:0000255" key="1">
    <source>
        <dbReference type="HAMAP-Rule" id="MF_00203"/>
    </source>
</evidence>
<sequence length="551" mass="64177">MLDKSVLYNVSEKPGVYIFKNGSEYIYIGKAKNLKRRLNSHFSLKEEKSRLIVEESNSLEVIIVKNEKEALLLEATLIFKHKPKYNIMLKEGERYPYIRISDDEYPYVEVTRSRKSSGIFFGPFTNITFTRLLLEILQKIFGVRTCKKDLSKIKKPCIEYHLKTCLAPCKFENKNIYMSAINNLKKVLSGDFEFVKDYIEQKMNYHSKMLDFENAAKYRDLLLSFEKLLNTQGVILNDKRCVDYIAYSKKVFLVLKVRGGVLLSKLFYEANLSFEEFLYQFYYGMKSDLPTKIVTFESSNLNKIEFDIPINVSLDDSDRYLLEIAYENLKEHFKAKRLRRDTLKKIKEILGLKKIPYRIEGTDISHRNGKFTVASLVVFENGVPKPEEYRRYKLGDILDDFESIRMFIRKRYTKHEAPDLIFVDGGRGQVNAAIEAFNELGLDVDVVGIAKKEEIIVTKNKEFKLKENDEVLRTLISIRDETHRVANSFSGSLKLKNYTLSKLDDIPGIGPKRKKILLKKYKSIENIKNAPLEELSKIVGNKIALRLKEYL</sequence>